<comment type="function">
    <text evidence="1">DNA ligase that catalyzes the formation of phosphodiester linkages between 5'-phosphoryl and 3'-hydroxyl groups in double-stranded DNA using NAD as a coenzyme and as the energy source for the reaction. It is essential for DNA replication and repair of damaged DNA.</text>
</comment>
<comment type="catalytic activity">
    <reaction evidence="1">
        <text>NAD(+) + (deoxyribonucleotide)n-3'-hydroxyl + 5'-phospho-(deoxyribonucleotide)m = (deoxyribonucleotide)n+m + AMP + beta-nicotinamide D-nucleotide.</text>
        <dbReference type="EC" id="6.5.1.2"/>
    </reaction>
</comment>
<comment type="cofactor">
    <cofactor evidence="1">
        <name>Mg(2+)</name>
        <dbReference type="ChEBI" id="CHEBI:18420"/>
    </cofactor>
    <cofactor evidence="1">
        <name>Mn(2+)</name>
        <dbReference type="ChEBI" id="CHEBI:29035"/>
    </cofactor>
</comment>
<comment type="similarity">
    <text evidence="1">Belongs to the NAD-dependent DNA ligase family. LigA subfamily.</text>
</comment>
<sequence length="701" mass="75899">MSAKSTPDAGPQEQATEAEAELRHRWQALADEVRDHQFRYYVRDAPVISDADFDKLFQQLEALEAEHPELRAPDSPTQLVGGAGFATDFTPAEHLERMLSLDDVFNVDELTAWSSRVRAEVGDDAAYLCELKVDGLALALVYRDGRLERAATRGDGRVGEDVTLNARTLDDVPERLTPSDEFPHPAVLEVRGEVFFRVADFEALNAGLVAEGKPPFANPRNSAAGSLRQKNPAVTARRPLRMVCHGIGYTEGFSPTSLHEAYGALRAWGLPVSDHTTRVQGMDAVRERIAYWGEHRHDIEHEIDGVVVKLDQIALQRRLGATSRAPRWAVAYKYPPEEAQTKLLDIRVNVGRTGRVTPFAYMEPVKVAGSTVGLATLHNASEVKRKGVLIGDTVVIRKAGDVIPEVLGPVVDLRDGTEREFVMPTHCPECGTELAPAKEGDADIRCPNSRTCPAQLRERVFHVAGRGAFDIEGLGYEAAIALLQAGVITDEGDLFTLTEDDLLRTELFTTKGGAVSANGRRLLANLGKAKAQPLWRVLVALSIRHVGPTAARALATEFGSLDAIIEASEDQLAAVEGVGPTIAAAVKEWFTVDWHCAIVEKWRAAGVRMADERDASIARTLEGLSIVVTGSLAGFSRDEAKEAIIARGGKAAGSVSKKTAYVVAGDSPGSKYDKAIDLGVPVLDEDGFRNLLENGPQAPEG</sequence>
<keyword id="KW-0227">DNA damage</keyword>
<keyword id="KW-0234">DNA repair</keyword>
<keyword id="KW-0235">DNA replication</keyword>
<keyword id="KW-0436">Ligase</keyword>
<keyword id="KW-0460">Magnesium</keyword>
<keyword id="KW-0464">Manganese</keyword>
<keyword id="KW-0479">Metal-binding</keyword>
<keyword id="KW-0520">NAD</keyword>
<keyword id="KW-0862">Zinc</keyword>
<name>DNLJ_MYCSS</name>
<proteinExistence type="inferred from homology"/>
<gene>
    <name evidence="1" type="primary">ligA</name>
    <name type="ordered locus">Mmcs_1881</name>
</gene>
<accession>Q1BAU4</accession>
<feature type="chain" id="PRO_0000313315" description="DNA ligase">
    <location>
        <begin position="1"/>
        <end position="701"/>
    </location>
</feature>
<feature type="domain" description="BRCT" evidence="1">
    <location>
        <begin position="616"/>
        <end position="701"/>
    </location>
</feature>
<feature type="region of interest" description="Disordered" evidence="2">
    <location>
        <begin position="1"/>
        <end position="21"/>
    </location>
</feature>
<feature type="active site" description="N6-AMP-lysine intermediate" evidence="1">
    <location>
        <position position="132"/>
    </location>
</feature>
<feature type="binding site" evidence="1">
    <location>
        <begin position="50"/>
        <end position="54"/>
    </location>
    <ligand>
        <name>NAD(+)</name>
        <dbReference type="ChEBI" id="CHEBI:57540"/>
    </ligand>
</feature>
<feature type="binding site" evidence="1">
    <location>
        <begin position="100"/>
        <end position="101"/>
    </location>
    <ligand>
        <name>NAD(+)</name>
        <dbReference type="ChEBI" id="CHEBI:57540"/>
    </ligand>
</feature>
<feature type="binding site" evidence="1">
    <location>
        <position position="130"/>
    </location>
    <ligand>
        <name>NAD(+)</name>
        <dbReference type="ChEBI" id="CHEBI:57540"/>
    </ligand>
</feature>
<feature type="binding site" evidence="1">
    <location>
        <position position="153"/>
    </location>
    <ligand>
        <name>NAD(+)</name>
        <dbReference type="ChEBI" id="CHEBI:57540"/>
    </ligand>
</feature>
<feature type="binding site" evidence="1">
    <location>
        <position position="193"/>
    </location>
    <ligand>
        <name>NAD(+)</name>
        <dbReference type="ChEBI" id="CHEBI:57540"/>
    </ligand>
</feature>
<feature type="binding site" evidence="1">
    <location>
        <position position="309"/>
    </location>
    <ligand>
        <name>NAD(+)</name>
        <dbReference type="ChEBI" id="CHEBI:57540"/>
    </ligand>
</feature>
<feature type="binding site" evidence="1">
    <location>
        <position position="333"/>
    </location>
    <ligand>
        <name>NAD(+)</name>
        <dbReference type="ChEBI" id="CHEBI:57540"/>
    </ligand>
</feature>
<feature type="binding site" evidence="1">
    <location>
        <position position="427"/>
    </location>
    <ligand>
        <name>Zn(2+)</name>
        <dbReference type="ChEBI" id="CHEBI:29105"/>
    </ligand>
</feature>
<feature type="binding site" evidence="1">
    <location>
        <position position="430"/>
    </location>
    <ligand>
        <name>Zn(2+)</name>
        <dbReference type="ChEBI" id="CHEBI:29105"/>
    </ligand>
</feature>
<feature type="binding site" evidence="1">
    <location>
        <position position="446"/>
    </location>
    <ligand>
        <name>Zn(2+)</name>
        <dbReference type="ChEBI" id="CHEBI:29105"/>
    </ligand>
</feature>
<feature type="binding site" evidence="1">
    <location>
        <position position="452"/>
    </location>
    <ligand>
        <name>Zn(2+)</name>
        <dbReference type="ChEBI" id="CHEBI:29105"/>
    </ligand>
</feature>
<protein>
    <recommendedName>
        <fullName evidence="1">DNA ligase</fullName>
        <ecNumber evidence="1">6.5.1.2</ecNumber>
    </recommendedName>
    <alternativeName>
        <fullName evidence="1">Polydeoxyribonucleotide synthase [NAD(+)]</fullName>
    </alternativeName>
</protein>
<organism>
    <name type="scientific">Mycobacterium sp. (strain MCS)</name>
    <dbReference type="NCBI Taxonomy" id="164756"/>
    <lineage>
        <taxon>Bacteria</taxon>
        <taxon>Bacillati</taxon>
        <taxon>Actinomycetota</taxon>
        <taxon>Actinomycetes</taxon>
        <taxon>Mycobacteriales</taxon>
        <taxon>Mycobacteriaceae</taxon>
        <taxon>Mycobacterium</taxon>
    </lineage>
</organism>
<dbReference type="EC" id="6.5.1.2" evidence="1"/>
<dbReference type="EMBL" id="CP000384">
    <property type="protein sequence ID" value="ABG07990.1"/>
    <property type="molecule type" value="Genomic_DNA"/>
</dbReference>
<dbReference type="SMR" id="Q1BAU4"/>
<dbReference type="KEGG" id="mmc:Mmcs_1881"/>
<dbReference type="HOGENOM" id="CLU_007764_2_0_11"/>
<dbReference type="BioCyc" id="MSP164756:G1G6O-1923-MONOMER"/>
<dbReference type="GO" id="GO:0005829">
    <property type="term" value="C:cytosol"/>
    <property type="evidence" value="ECO:0007669"/>
    <property type="project" value="TreeGrafter"/>
</dbReference>
<dbReference type="GO" id="GO:0003911">
    <property type="term" value="F:DNA ligase (NAD+) activity"/>
    <property type="evidence" value="ECO:0007669"/>
    <property type="project" value="UniProtKB-UniRule"/>
</dbReference>
<dbReference type="GO" id="GO:0046872">
    <property type="term" value="F:metal ion binding"/>
    <property type="evidence" value="ECO:0007669"/>
    <property type="project" value="UniProtKB-KW"/>
</dbReference>
<dbReference type="GO" id="GO:0006281">
    <property type="term" value="P:DNA repair"/>
    <property type="evidence" value="ECO:0007669"/>
    <property type="project" value="UniProtKB-KW"/>
</dbReference>
<dbReference type="GO" id="GO:0006260">
    <property type="term" value="P:DNA replication"/>
    <property type="evidence" value="ECO:0007669"/>
    <property type="project" value="UniProtKB-KW"/>
</dbReference>
<dbReference type="CDD" id="cd17748">
    <property type="entry name" value="BRCT_DNA_ligase_like"/>
    <property type="match status" value="1"/>
</dbReference>
<dbReference type="CDD" id="cd00114">
    <property type="entry name" value="LIGANc"/>
    <property type="match status" value="1"/>
</dbReference>
<dbReference type="FunFam" id="1.10.150.20:FF:000006">
    <property type="entry name" value="DNA ligase"/>
    <property type="match status" value="1"/>
</dbReference>
<dbReference type="FunFam" id="1.10.287.610:FF:000002">
    <property type="entry name" value="DNA ligase"/>
    <property type="match status" value="1"/>
</dbReference>
<dbReference type="FunFam" id="2.40.50.140:FF:000012">
    <property type="entry name" value="DNA ligase"/>
    <property type="match status" value="1"/>
</dbReference>
<dbReference type="FunFam" id="3.30.470.30:FF:000001">
    <property type="entry name" value="DNA ligase"/>
    <property type="match status" value="1"/>
</dbReference>
<dbReference type="FunFam" id="3.40.50.10190:FF:000054">
    <property type="entry name" value="DNA ligase"/>
    <property type="match status" value="1"/>
</dbReference>
<dbReference type="Gene3D" id="6.20.10.30">
    <property type="match status" value="1"/>
</dbReference>
<dbReference type="Gene3D" id="1.10.150.20">
    <property type="entry name" value="5' to 3' exonuclease, C-terminal subdomain"/>
    <property type="match status" value="2"/>
</dbReference>
<dbReference type="Gene3D" id="3.40.50.10190">
    <property type="entry name" value="BRCT domain"/>
    <property type="match status" value="1"/>
</dbReference>
<dbReference type="Gene3D" id="3.30.470.30">
    <property type="entry name" value="DNA ligase/mRNA capping enzyme"/>
    <property type="match status" value="1"/>
</dbReference>
<dbReference type="Gene3D" id="1.10.287.610">
    <property type="entry name" value="Helix hairpin bin"/>
    <property type="match status" value="1"/>
</dbReference>
<dbReference type="Gene3D" id="2.40.50.140">
    <property type="entry name" value="Nucleic acid-binding proteins"/>
    <property type="match status" value="1"/>
</dbReference>
<dbReference type="HAMAP" id="MF_01588">
    <property type="entry name" value="DNA_ligase_A"/>
    <property type="match status" value="1"/>
</dbReference>
<dbReference type="InterPro" id="IPR001357">
    <property type="entry name" value="BRCT_dom"/>
</dbReference>
<dbReference type="InterPro" id="IPR036420">
    <property type="entry name" value="BRCT_dom_sf"/>
</dbReference>
<dbReference type="InterPro" id="IPR041663">
    <property type="entry name" value="DisA/LigA_HHH"/>
</dbReference>
<dbReference type="InterPro" id="IPR001679">
    <property type="entry name" value="DNA_ligase"/>
</dbReference>
<dbReference type="InterPro" id="IPR018239">
    <property type="entry name" value="DNA_ligase_AS"/>
</dbReference>
<dbReference type="InterPro" id="IPR033136">
    <property type="entry name" value="DNA_ligase_CS"/>
</dbReference>
<dbReference type="InterPro" id="IPR013839">
    <property type="entry name" value="DNAligase_adenylation"/>
</dbReference>
<dbReference type="InterPro" id="IPR013840">
    <property type="entry name" value="DNAligase_N"/>
</dbReference>
<dbReference type="InterPro" id="IPR012340">
    <property type="entry name" value="NA-bd_OB-fold"/>
</dbReference>
<dbReference type="InterPro" id="IPR004150">
    <property type="entry name" value="NAD_DNA_ligase_OB"/>
</dbReference>
<dbReference type="InterPro" id="IPR010994">
    <property type="entry name" value="RuvA_2-like"/>
</dbReference>
<dbReference type="InterPro" id="IPR004149">
    <property type="entry name" value="Znf_DNAligase_C4"/>
</dbReference>
<dbReference type="NCBIfam" id="TIGR00575">
    <property type="entry name" value="dnlj"/>
    <property type="match status" value="1"/>
</dbReference>
<dbReference type="NCBIfam" id="NF005932">
    <property type="entry name" value="PRK07956.1"/>
    <property type="match status" value="1"/>
</dbReference>
<dbReference type="PANTHER" id="PTHR23389">
    <property type="entry name" value="CHROMOSOME TRANSMISSION FIDELITY FACTOR 18"/>
    <property type="match status" value="1"/>
</dbReference>
<dbReference type="PANTHER" id="PTHR23389:SF9">
    <property type="entry name" value="DNA LIGASE"/>
    <property type="match status" value="1"/>
</dbReference>
<dbReference type="Pfam" id="PF00533">
    <property type="entry name" value="BRCT"/>
    <property type="match status" value="1"/>
</dbReference>
<dbReference type="Pfam" id="PF01653">
    <property type="entry name" value="DNA_ligase_aden"/>
    <property type="match status" value="1"/>
</dbReference>
<dbReference type="Pfam" id="PF03120">
    <property type="entry name" value="DNA_ligase_OB"/>
    <property type="match status" value="1"/>
</dbReference>
<dbReference type="Pfam" id="PF03119">
    <property type="entry name" value="DNA_ligase_ZBD"/>
    <property type="match status" value="1"/>
</dbReference>
<dbReference type="Pfam" id="PF12826">
    <property type="entry name" value="HHH_2"/>
    <property type="match status" value="1"/>
</dbReference>
<dbReference type="Pfam" id="PF22745">
    <property type="entry name" value="Nlig-Ia"/>
    <property type="match status" value="1"/>
</dbReference>
<dbReference type="PIRSF" id="PIRSF001604">
    <property type="entry name" value="LigA"/>
    <property type="match status" value="1"/>
</dbReference>
<dbReference type="SMART" id="SM00292">
    <property type="entry name" value="BRCT"/>
    <property type="match status" value="1"/>
</dbReference>
<dbReference type="SMART" id="SM00532">
    <property type="entry name" value="LIGANc"/>
    <property type="match status" value="1"/>
</dbReference>
<dbReference type="SUPFAM" id="SSF52113">
    <property type="entry name" value="BRCT domain"/>
    <property type="match status" value="1"/>
</dbReference>
<dbReference type="SUPFAM" id="SSF56091">
    <property type="entry name" value="DNA ligase/mRNA capping enzyme, catalytic domain"/>
    <property type="match status" value="1"/>
</dbReference>
<dbReference type="SUPFAM" id="SSF50249">
    <property type="entry name" value="Nucleic acid-binding proteins"/>
    <property type="match status" value="1"/>
</dbReference>
<dbReference type="SUPFAM" id="SSF47781">
    <property type="entry name" value="RuvA domain 2-like"/>
    <property type="match status" value="1"/>
</dbReference>
<dbReference type="PROSITE" id="PS50172">
    <property type="entry name" value="BRCT"/>
    <property type="match status" value="1"/>
</dbReference>
<dbReference type="PROSITE" id="PS01055">
    <property type="entry name" value="DNA_LIGASE_N1"/>
    <property type="match status" value="1"/>
</dbReference>
<dbReference type="PROSITE" id="PS01056">
    <property type="entry name" value="DNA_LIGASE_N2"/>
    <property type="match status" value="1"/>
</dbReference>
<reference key="1">
    <citation type="submission" date="2006-06" db="EMBL/GenBank/DDBJ databases">
        <title>Complete sequence of chromosome of Mycobacterium sp. MCS.</title>
        <authorList>
            <consortium name="US DOE Joint Genome Institute"/>
            <person name="Copeland A."/>
            <person name="Lucas S."/>
            <person name="Lapidus A."/>
            <person name="Barry K."/>
            <person name="Detter J.C."/>
            <person name="Glavina del Rio T."/>
            <person name="Hammon N."/>
            <person name="Israni S."/>
            <person name="Dalin E."/>
            <person name="Tice H."/>
            <person name="Pitluck S."/>
            <person name="Martinez M."/>
            <person name="Schmutz J."/>
            <person name="Larimer F."/>
            <person name="Land M."/>
            <person name="Hauser L."/>
            <person name="Kyrpides N."/>
            <person name="Kim E."/>
            <person name="Miller C.D."/>
            <person name="Hughes J.E."/>
            <person name="Anderson A.J."/>
            <person name="Sims R.C."/>
            <person name="Richardson P."/>
        </authorList>
    </citation>
    <scope>NUCLEOTIDE SEQUENCE [LARGE SCALE GENOMIC DNA]</scope>
    <source>
        <strain>MCS</strain>
    </source>
</reference>
<evidence type="ECO:0000255" key="1">
    <source>
        <dbReference type="HAMAP-Rule" id="MF_01588"/>
    </source>
</evidence>
<evidence type="ECO:0000256" key="2">
    <source>
        <dbReference type="SAM" id="MobiDB-lite"/>
    </source>
</evidence>